<evidence type="ECO:0000255" key="1">
    <source>
        <dbReference type="HAMAP-Rule" id="MF_00270"/>
    </source>
</evidence>
<evidence type="ECO:0000305" key="2"/>
<proteinExistence type="inferred from homology"/>
<accession>B8GNS3</accession>
<organism>
    <name type="scientific">Thioalkalivibrio sulfidiphilus (strain HL-EbGR7)</name>
    <dbReference type="NCBI Taxonomy" id="396588"/>
    <lineage>
        <taxon>Bacteria</taxon>
        <taxon>Pseudomonadati</taxon>
        <taxon>Pseudomonadota</taxon>
        <taxon>Gammaproteobacteria</taxon>
        <taxon>Chromatiales</taxon>
        <taxon>Ectothiorhodospiraceae</taxon>
        <taxon>Thioalkalivibrio</taxon>
    </lineage>
</organism>
<reference key="1">
    <citation type="journal article" date="2011" name="Stand. Genomic Sci.">
        <title>Complete genome sequence of 'Thioalkalivibrio sulfidophilus' HL-EbGr7.</title>
        <authorList>
            <person name="Muyzer G."/>
            <person name="Sorokin D.Y."/>
            <person name="Mavromatis K."/>
            <person name="Lapidus A."/>
            <person name="Clum A."/>
            <person name="Ivanova N."/>
            <person name="Pati A."/>
            <person name="d'Haeseleer P."/>
            <person name="Woyke T."/>
            <person name="Kyrpides N.C."/>
        </authorList>
    </citation>
    <scope>NUCLEOTIDE SEQUENCE [LARGE SCALE GENOMIC DNA]</scope>
    <source>
        <strain>HL-EbGR7</strain>
    </source>
</reference>
<gene>
    <name evidence="1" type="primary">rpsR</name>
    <name type="ordered locus">Tgr7_0924</name>
</gene>
<feature type="chain" id="PRO_1000196537" description="Small ribosomal subunit protein bS18">
    <location>
        <begin position="1"/>
        <end position="74"/>
    </location>
</feature>
<dbReference type="EMBL" id="CP001339">
    <property type="protein sequence ID" value="ACL72012.1"/>
    <property type="molecule type" value="Genomic_DNA"/>
</dbReference>
<dbReference type="RefSeq" id="WP_012637497.1">
    <property type="nucleotide sequence ID" value="NC_011901.1"/>
</dbReference>
<dbReference type="SMR" id="B8GNS3"/>
<dbReference type="STRING" id="396588.Tgr7_0924"/>
<dbReference type="KEGG" id="tgr:Tgr7_0924"/>
<dbReference type="eggNOG" id="COG0238">
    <property type="taxonomic scope" value="Bacteria"/>
</dbReference>
<dbReference type="HOGENOM" id="CLU_148710_2_3_6"/>
<dbReference type="OrthoDB" id="9812008at2"/>
<dbReference type="Proteomes" id="UP000002383">
    <property type="component" value="Chromosome"/>
</dbReference>
<dbReference type="GO" id="GO:0022627">
    <property type="term" value="C:cytosolic small ribosomal subunit"/>
    <property type="evidence" value="ECO:0007669"/>
    <property type="project" value="TreeGrafter"/>
</dbReference>
<dbReference type="GO" id="GO:0070181">
    <property type="term" value="F:small ribosomal subunit rRNA binding"/>
    <property type="evidence" value="ECO:0007669"/>
    <property type="project" value="TreeGrafter"/>
</dbReference>
<dbReference type="GO" id="GO:0003735">
    <property type="term" value="F:structural constituent of ribosome"/>
    <property type="evidence" value="ECO:0007669"/>
    <property type="project" value="InterPro"/>
</dbReference>
<dbReference type="GO" id="GO:0006412">
    <property type="term" value="P:translation"/>
    <property type="evidence" value="ECO:0007669"/>
    <property type="project" value="UniProtKB-UniRule"/>
</dbReference>
<dbReference type="FunFam" id="4.10.640.10:FF:000001">
    <property type="entry name" value="30S ribosomal protein S18"/>
    <property type="match status" value="1"/>
</dbReference>
<dbReference type="Gene3D" id="4.10.640.10">
    <property type="entry name" value="Ribosomal protein S18"/>
    <property type="match status" value="1"/>
</dbReference>
<dbReference type="HAMAP" id="MF_00270">
    <property type="entry name" value="Ribosomal_bS18"/>
    <property type="match status" value="1"/>
</dbReference>
<dbReference type="InterPro" id="IPR001648">
    <property type="entry name" value="Ribosomal_bS18"/>
</dbReference>
<dbReference type="InterPro" id="IPR018275">
    <property type="entry name" value="Ribosomal_bS18_CS"/>
</dbReference>
<dbReference type="InterPro" id="IPR036870">
    <property type="entry name" value="Ribosomal_bS18_sf"/>
</dbReference>
<dbReference type="NCBIfam" id="TIGR00165">
    <property type="entry name" value="S18"/>
    <property type="match status" value="1"/>
</dbReference>
<dbReference type="PANTHER" id="PTHR13479">
    <property type="entry name" value="30S RIBOSOMAL PROTEIN S18"/>
    <property type="match status" value="1"/>
</dbReference>
<dbReference type="PANTHER" id="PTHR13479:SF40">
    <property type="entry name" value="SMALL RIBOSOMAL SUBUNIT PROTEIN BS18M"/>
    <property type="match status" value="1"/>
</dbReference>
<dbReference type="Pfam" id="PF01084">
    <property type="entry name" value="Ribosomal_S18"/>
    <property type="match status" value="1"/>
</dbReference>
<dbReference type="PRINTS" id="PR00974">
    <property type="entry name" value="RIBOSOMALS18"/>
</dbReference>
<dbReference type="SUPFAM" id="SSF46911">
    <property type="entry name" value="Ribosomal protein S18"/>
    <property type="match status" value="1"/>
</dbReference>
<dbReference type="PROSITE" id="PS00057">
    <property type="entry name" value="RIBOSOMAL_S18"/>
    <property type="match status" value="1"/>
</dbReference>
<protein>
    <recommendedName>
        <fullName evidence="1">Small ribosomal subunit protein bS18</fullName>
    </recommendedName>
    <alternativeName>
        <fullName evidence="2">30S ribosomal protein S18</fullName>
    </alternativeName>
</protein>
<name>RS18_THISH</name>
<comment type="function">
    <text evidence="1">Binds as a heterodimer with protein bS6 to the central domain of the 16S rRNA, where it helps stabilize the platform of the 30S subunit.</text>
</comment>
<comment type="subunit">
    <text evidence="1">Part of the 30S ribosomal subunit. Forms a tight heterodimer with protein bS6.</text>
</comment>
<comment type="similarity">
    <text evidence="1">Belongs to the bacterial ribosomal protein bS18 family.</text>
</comment>
<sequence>MSRFFRRRKYCRFTAEGVEFIDYKDLNTLKNYITETGKIVPSRITGTSARYQRQLATAVKRARYLALLPYCDNH</sequence>
<keyword id="KW-1185">Reference proteome</keyword>
<keyword id="KW-0687">Ribonucleoprotein</keyword>
<keyword id="KW-0689">Ribosomal protein</keyword>
<keyword id="KW-0694">RNA-binding</keyword>
<keyword id="KW-0699">rRNA-binding</keyword>